<sequence length="142" mass="15663">MLLVVADVILTSLYLSSSGDFKYESLKLLGKFETCCIDVSTTIGRCLPPFRSSHCFTFSSWALGVPVRTMSNSRVVPLTKKLNGLHSLLSFIPRLEKLHVPLTVSNMSLEMGSPLIIIKRVYNPLSSRLGAAIINFNSSRSI</sequence>
<feature type="chain" id="PRO_0000116352" description="Uncharacterized 15.7 kDa protein">
    <location>
        <begin position="1"/>
        <end position="142"/>
    </location>
</feature>
<proteinExistence type="predicted"/>
<organism>
    <name type="scientific">Gallid herpesvirus 2 (strain GA)</name>
    <name type="common">GaHV-2</name>
    <name type="synonym">Marek's disease herpesvirus type 1</name>
    <dbReference type="NCBI Taxonomy" id="10388"/>
    <lineage>
        <taxon>Viruses</taxon>
        <taxon>Duplodnaviria</taxon>
        <taxon>Heunggongvirae</taxon>
        <taxon>Peploviricota</taxon>
        <taxon>Herviviricetes</taxon>
        <taxon>Herpesvirales</taxon>
        <taxon>Orthoherpesviridae</taxon>
        <taxon>Alphaherpesvirinae</taxon>
        <taxon>Mardivirus</taxon>
        <taxon>Mardivirus gallidalpha2</taxon>
        <taxon>Gallid alphaherpesvirus 2</taxon>
    </lineage>
</organism>
<name>US426_GAHVG</name>
<dbReference type="EMBL" id="M80595">
    <property type="protein sequence ID" value="AAB59898.1"/>
    <property type="molecule type" value="Genomic_DNA"/>
</dbReference>
<organismHost>
    <name type="scientific">Gallus gallus</name>
    <name type="common">Chicken</name>
    <dbReference type="NCBI Taxonomy" id="9031"/>
</organismHost>
<accession>Q05104</accession>
<protein>
    <recommendedName>
        <fullName>Uncharacterized 15.7 kDa protein</fullName>
    </recommendedName>
</protein>
<gene>
    <name type="primary">US426</name>
</gene>
<reference key="1">
    <citation type="journal article" date="1992" name="Virus Genes">
        <title>Sequence determination and genetic content of an 8.9-kb restriction fragment in the short unique region and the internal inverted repeat of Marek's disease virus type 1 DNA.</title>
        <authorList>
            <person name="Sakaguchi M."/>
            <person name="Urakawa T."/>
            <person name="Hirayama Y."/>
            <person name="Miki N."/>
            <person name="Yamamoto M."/>
            <person name="Hirai K."/>
        </authorList>
    </citation>
    <scope>NUCLEOTIDE SEQUENCE [GENOMIC DNA]</scope>
</reference>